<feature type="chain" id="PRO_0000300396" description="DNA-directed RNA polymerase subunit beta">
    <location>
        <begin position="1"/>
        <end position="1342"/>
    </location>
</feature>
<accession>A1S211</accession>
<comment type="function">
    <text evidence="1">DNA-dependent RNA polymerase catalyzes the transcription of DNA into RNA using the four ribonucleoside triphosphates as substrates.</text>
</comment>
<comment type="catalytic activity">
    <reaction evidence="1">
        <text>RNA(n) + a ribonucleoside 5'-triphosphate = RNA(n+1) + diphosphate</text>
        <dbReference type="Rhea" id="RHEA:21248"/>
        <dbReference type="Rhea" id="RHEA-COMP:14527"/>
        <dbReference type="Rhea" id="RHEA-COMP:17342"/>
        <dbReference type="ChEBI" id="CHEBI:33019"/>
        <dbReference type="ChEBI" id="CHEBI:61557"/>
        <dbReference type="ChEBI" id="CHEBI:140395"/>
        <dbReference type="EC" id="2.7.7.6"/>
    </reaction>
</comment>
<comment type="subunit">
    <text evidence="1">The RNAP catalytic core consists of 2 alpha, 1 beta, 1 beta' and 1 omega subunit. When a sigma factor is associated with the core the holoenzyme is formed, which can initiate transcription.</text>
</comment>
<comment type="similarity">
    <text evidence="1">Belongs to the RNA polymerase beta chain family.</text>
</comment>
<proteinExistence type="inferred from homology"/>
<gene>
    <name evidence="1" type="primary">rpoB</name>
    <name type="ordered locus">Sama_0206</name>
</gene>
<evidence type="ECO:0000255" key="1">
    <source>
        <dbReference type="HAMAP-Rule" id="MF_01321"/>
    </source>
</evidence>
<protein>
    <recommendedName>
        <fullName evidence="1">DNA-directed RNA polymerase subunit beta</fullName>
        <shortName evidence="1">RNAP subunit beta</shortName>
        <ecNumber evidence="1">2.7.7.6</ecNumber>
    </recommendedName>
    <alternativeName>
        <fullName evidence="1">RNA polymerase subunit beta</fullName>
    </alternativeName>
    <alternativeName>
        <fullName evidence="1">Transcriptase subunit beta</fullName>
    </alternativeName>
</protein>
<sequence length="1342" mass="150176">MVYSYSEKKRIRKDFGKRPQVLDIPYLLSIQLDSFKKFTDQDPTGERGLEAAFRSVFPIKSFSGNSELQYVSYKLGEPVFDVKECQIRGVTYSAPLRVKLRMVLFDREAAPGTVKDIKEQEVYMGDIPLMTENGTFVINGTERVIVSQLHRSPGVFFDHDRGKTHSSGKVLYNARIIPYRGSWLDFEFDPKDALFVRIDRRRKLPATIILRALDFSTQDILDIFFERVDFTIKKDSLVMKLLPERLRGETASYDIKDAEGNIVVEKGRRITARHIRQLEKTNTTELEVPVEYIVGKIAAQDYIDPDTGEVLVTANNEIRLEDLAQLSLAGIKDISTLYINELDHGAYISDTLRIDSTTNRLEALVEIYRMMRPGEPPTKDAAEALFQNLFFSEERYDLSKVGRMKFNRRLEIADDVGTGVLSNDDIVAVMKKIIEIRNGNDEVDDIDHLGNRRIRSVGEMAENQFRVGLVRVERAVRERLSLGDLNELMPQDLINAKPISAAVKEFFGSSQLSQFMDQNNPLSEVTHKRRISALGPGGLTRERAGFEVRDVHPTHYGRLCPIETPEGPNIGLINSLATFARTNSYGFLETPYRKVVDGVVTDDVEYLSAIEEGRYVIAQANIELDGEGRILEEQVACRHKGESTFMRASDIQYMDVSPQQIISVAASLIPFLEHDDANRALMGANMQRQAVPTLRSEKPLVGTGIERALAVDSGVVVAAKRGGVIDYVDASRIVVKVNEDELRPGEAGIDIYNLTKYTRSNQNTCINQRPCCQVGDPIVRGDVLADGPSTDLGDLALGQNMRVAFMPWNGYNFEDSILISERVVQDDRFTTIHIQELSCIARDTKLGSEEITADIPNVGESALSKLDESGIVYIGAEVKGGDILVGKVTPKGETQLTPEEKLLRAIFGEKASDVKDSSLRVPNSVTGTVIDVQVFTRDGVEKDKRAIEIEEMHIAQARKDLSEEFKILEEGVLSRARNLLLAGGYTQAQLDAIPRKELLTQVIDDETKQTELEQLAEQHEELKADFDKKFEHKRRKITQGDDLAPGVLKIVKVYLAVKRTIQPGDKMAGRHGNKGVISKICPIEDMPYDEQGNPVDIVLNPLGVPSRMNIGQVLEVHMGAAAKGIGNRIQAMLEEQREVAELRGYIKQAYDLGETQQKVDIESFTDEEVIRLAKHLKDGLPTATPAFDGAKEKEIKQMLELAGLPTSGQLRLFDGRTGNAFEREVTVGYMYMLKLNHLVDDKMHARSTGSYSLVTQQPLGGKAQFGGQRFGEMEVWALEAYGAAYTLQEMLTVKSDDVNGRTQMYKNIVDGNHQMQPGMPESFNVLLKEIRSLGINIELDQE</sequence>
<reference key="1">
    <citation type="submission" date="2006-12" db="EMBL/GenBank/DDBJ databases">
        <title>Complete sequence of Shewanella amazonensis SB2B.</title>
        <authorList>
            <consortium name="US DOE Joint Genome Institute"/>
            <person name="Copeland A."/>
            <person name="Lucas S."/>
            <person name="Lapidus A."/>
            <person name="Barry K."/>
            <person name="Detter J.C."/>
            <person name="Glavina del Rio T."/>
            <person name="Hammon N."/>
            <person name="Israni S."/>
            <person name="Dalin E."/>
            <person name="Tice H."/>
            <person name="Pitluck S."/>
            <person name="Munk A.C."/>
            <person name="Brettin T."/>
            <person name="Bruce D."/>
            <person name="Han C."/>
            <person name="Tapia R."/>
            <person name="Gilna P."/>
            <person name="Schmutz J."/>
            <person name="Larimer F."/>
            <person name="Land M."/>
            <person name="Hauser L."/>
            <person name="Kyrpides N."/>
            <person name="Mikhailova N."/>
            <person name="Fredrickson J."/>
            <person name="Richardson P."/>
        </authorList>
    </citation>
    <scope>NUCLEOTIDE SEQUENCE [LARGE SCALE GENOMIC DNA]</scope>
    <source>
        <strain>ATCC BAA-1098 / SB2B</strain>
    </source>
</reference>
<name>RPOB_SHEAM</name>
<dbReference type="EC" id="2.7.7.6" evidence="1"/>
<dbReference type="EMBL" id="CP000507">
    <property type="protein sequence ID" value="ABL98417.1"/>
    <property type="molecule type" value="Genomic_DNA"/>
</dbReference>
<dbReference type="RefSeq" id="WP_011758328.1">
    <property type="nucleotide sequence ID" value="NC_008700.1"/>
</dbReference>
<dbReference type="SMR" id="A1S211"/>
<dbReference type="STRING" id="326297.Sama_0206"/>
<dbReference type="KEGG" id="saz:Sama_0206"/>
<dbReference type="eggNOG" id="COG0085">
    <property type="taxonomic scope" value="Bacteria"/>
</dbReference>
<dbReference type="HOGENOM" id="CLU_000524_4_1_6"/>
<dbReference type="OrthoDB" id="9803954at2"/>
<dbReference type="Proteomes" id="UP000009175">
    <property type="component" value="Chromosome"/>
</dbReference>
<dbReference type="GO" id="GO:0000428">
    <property type="term" value="C:DNA-directed RNA polymerase complex"/>
    <property type="evidence" value="ECO:0007669"/>
    <property type="project" value="UniProtKB-KW"/>
</dbReference>
<dbReference type="GO" id="GO:0003677">
    <property type="term" value="F:DNA binding"/>
    <property type="evidence" value="ECO:0007669"/>
    <property type="project" value="UniProtKB-UniRule"/>
</dbReference>
<dbReference type="GO" id="GO:0003899">
    <property type="term" value="F:DNA-directed RNA polymerase activity"/>
    <property type="evidence" value="ECO:0007669"/>
    <property type="project" value="UniProtKB-UniRule"/>
</dbReference>
<dbReference type="GO" id="GO:0032549">
    <property type="term" value="F:ribonucleoside binding"/>
    <property type="evidence" value="ECO:0007669"/>
    <property type="project" value="InterPro"/>
</dbReference>
<dbReference type="GO" id="GO:0006351">
    <property type="term" value="P:DNA-templated transcription"/>
    <property type="evidence" value="ECO:0007669"/>
    <property type="project" value="UniProtKB-UniRule"/>
</dbReference>
<dbReference type="CDD" id="cd00653">
    <property type="entry name" value="RNA_pol_B_RPB2"/>
    <property type="match status" value="1"/>
</dbReference>
<dbReference type="FunFam" id="2.40.270.10:FF:000003">
    <property type="entry name" value="DNA-directed RNA polymerase subunit beta"/>
    <property type="match status" value="1"/>
</dbReference>
<dbReference type="FunFam" id="2.40.270.10:FF:000004">
    <property type="entry name" value="DNA-directed RNA polymerase subunit beta"/>
    <property type="match status" value="1"/>
</dbReference>
<dbReference type="FunFam" id="2.40.50.100:FF:000006">
    <property type="entry name" value="DNA-directed RNA polymerase subunit beta"/>
    <property type="match status" value="1"/>
</dbReference>
<dbReference type="FunFam" id="2.40.50.150:FF:000001">
    <property type="entry name" value="DNA-directed RNA polymerase subunit beta"/>
    <property type="match status" value="1"/>
</dbReference>
<dbReference type="FunFam" id="3.90.1100.10:FF:000002">
    <property type="entry name" value="DNA-directed RNA polymerase subunit beta"/>
    <property type="match status" value="1"/>
</dbReference>
<dbReference type="FunFam" id="3.90.1110.10:FF:000001">
    <property type="entry name" value="DNA-directed RNA polymerase subunit beta"/>
    <property type="match status" value="1"/>
</dbReference>
<dbReference type="FunFam" id="3.90.1110.10:FF:000004">
    <property type="entry name" value="DNA-directed RNA polymerase subunit beta"/>
    <property type="match status" value="1"/>
</dbReference>
<dbReference type="FunFam" id="3.90.1800.10:FF:000001">
    <property type="entry name" value="DNA-directed RNA polymerase subunit beta"/>
    <property type="match status" value="1"/>
</dbReference>
<dbReference type="Gene3D" id="2.40.50.100">
    <property type="match status" value="1"/>
</dbReference>
<dbReference type="Gene3D" id="2.40.50.150">
    <property type="match status" value="1"/>
</dbReference>
<dbReference type="Gene3D" id="3.90.1100.10">
    <property type="match status" value="2"/>
</dbReference>
<dbReference type="Gene3D" id="6.10.140.1670">
    <property type="match status" value="1"/>
</dbReference>
<dbReference type="Gene3D" id="2.30.150.10">
    <property type="entry name" value="DNA-directed RNA polymerase, beta subunit, external 1 domain"/>
    <property type="match status" value="1"/>
</dbReference>
<dbReference type="Gene3D" id="2.40.270.10">
    <property type="entry name" value="DNA-directed RNA polymerase, subunit 2, domain 6"/>
    <property type="match status" value="1"/>
</dbReference>
<dbReference type="Gene3D" id="3.90.1800.10">
    <property type="entry name" value="RNA polymerase alpha subunit dimerisation domain"/>
    <property type="match status" value="1"/>
</dbReference>
<dbReference type="Gene3D" id="3.90.1110.10">
    <property type="entry name" value="RNA polymerase Rpb2, domain 2"/>
    <property type="match status" value="1"/>
</dbReference>
<dbReference type="HAMAP" id="MF_01321">
    <property type="entry name" value="RNApol_bact_RpoB"/>
    <property type="match status" value="1"/>
</dbReference>
<dbReference type="InterPro" id="IPR042107">
    <property type="entry name" value="DNA-dir_RNA_pol_bsu_ext_1_sf"/>
</dbReference>
<dbReference type="InterPro" id="IPR019462">
    <property type="entry name" value="DNA-dir_RNA_pol_bsu_external_1"/>
</dbReference>
<dbReference type="InterPro" id="IPR015712">
    <property type="entry name" value="DNA-dir_RNA_pol_su2"/>
</dbReference>
<dbReference type="InterPro" id="IPR007120">
    <property type="entry name" value="DNA-dir_RNAP_su2_dom"/>
</dbReference>
<dbReference type="InterPro" id="IPR037033">
    <property type="entry name" value="DNA-dir_RNAP_su2_hyb_sf"/>
</dbReference>
<dbReference type="InterPro" id="IPR010243">
    <property type="entry name" value="RNA_pol_bsu_bac"/>
</dbReference>
<dbReference type="InterPro" id="IPR007121">
    <property type="entry name" value="RNA_pol_bsu_CS"/>
</dbReference>
<dbReference type="InterPro" id="IPR007644">
    <property type="entry name" value="RNA_pol_bsu_protrusion"/>
</dbReference>
<dbReference type="InterPro" id="IPR007642">
    <property type="entry name" value="RNA_pol_Rpb2_2"/>
</dbReference>
<dbReference type="InterPro" id="IPR037034">
    <property type="entry name" value="RNA_pol_Rpb2_2_sf"/>
</dbReference>
<dbReference type="InterPro" id="IPR007645">
    <property type="entry name" value="RNA_pol_Rpb2_3"/>
</dbReference>
<dbReference type="InterPro" id="IPR007641">
    <property type="entry name" value="RNA_pol_Rpb2_7"/>
</dbReference>
<dbReference type="InterPro" id="IPR014724">
    <property type="entry name" value="RNA_pol_RPB2_OB-fold"/>
</dbReference>
<dbReference type="NCBIfam" id="NF001616">
    <property type="entry name" value="PRK00405.1"/>
    <property type="match status" value="1"/>
</dbReference>
<dbReference type="NCBIfam" id="TIGR02013">
    <property type="entry name" value="rpoB"/>
    <property type="match status" value="1"/>
</dbReference>
<dbReference type="PANTHER" id="PTHR20856">
    <property type="entry name" value="DNA-DIRECTED RNA POLYMERASE I SUBUNIT 2"/>
    <property type="match status" value="1"/>
</dbReference>
<dbReference type="Pfam" id="PF04563">
    <property type="entry name" value="RNA_pol_Rpb2_1"/>
    <property type="match status" value="1"/>
</dbReference>
<dbReference type="Pfam" id="PF04561">
    <property type="entry name" value="RNA_pol_Rpb2_2"/>
    <property type="match status" value="2"/>
</dbReference>
<dbReference type="Pfam" id="PF04565">
    <property type="entry name" value="RNA_pol_Rpb2_3"/>
    <property type="match status" value="1"/>
</dbReference>
<dbReference type="Pfam" id="PF10385">
    <property type="entry name" value="RNA_pol_Rpb2_45"/>
    <property type="match status" value="1"/>
</dbReference>
<dbReference type="Pfam" id="PF00562">
    <property type="entry name" value="RNA_pol_Rpb2_6"/>
    <property type="match status" value="1"/>
</dbReference>
<dbReference type="Pfam" id="PF04560">
    <property type="entry name" value="RNA_pol_Rpb2_7"/>
    <property type="match status" value="1"/>
</dbReference>
<dbReference type="SUPFAM" id="SSF64484">
    <property type="entry name" value="beta and beta-prime subunits of DNA dependent RNA-polymerase"/>
    <property type="match status" value="1"/>
</dbReference>
<dbReference type="PROSITE" id="PS01166">
    <property type="entry name" value="RNA_POL_BETA"/>
    <property type="match status" value="1"/>
</dbReference>
<keyword id="KW-0240">DNA-directed RNA polymerase</keyword>
<keyword id="KW-0548">Nucleotidyltransferase</keyword>
<keyword id="KW-1185">Reference proteome</keyword>
<keyword id="KW-0804">Transcription</keyword>
<keyword id="KW-0808">Transferase</keyword>
<organism>
    <name type="scientific">Shewanella amazonensis (strain ATCC BAA-1098 / SB2B)</name>
    <dbReference type="NCBI Taxonomy" id="326297"/>
    <lineage>
        <taxon>Bacteria</taxon>
        <taxon>Pseudomonadati</taxon>
        <taxon>Pseudomonadota</taxon>
        <taxon>Gammaproteobacteria</taxon>
        <taxon>Alteromonadales</taxon>
        <taxon>Shewanellaceae</taxon>
        <taxon>Shewanella</taxon>
    </lineage>
</organism>